<gene>
    <name evidence="1" type="primary">pyrH</name>
    <name type="ordered locus">TON_1270</name>
</gene>
<accession>B6YXE5</accession>
<sequence>MRIVFDIGGSVLVPDDPDIDFIKAIAYELTKISEDHEVAVVVGGGKVARKYIKAAKTFTPNETFKDYIGIHITRANAMLLIAALGEKAYPFVVQDFRKAWEVIQLKKIPIMGGTHPGHTTDAVAALLAEYLQADLLIVVTNVDGVYDSDPRKNPNAKKLDRITVDQLVDIAMEGESKAGGSGVVDALAAKFIQRGKIRTYIVGKKDAYSLFDVIKGKHSGTVVEP</sequence>
<evidence type="ECO:0000255" key="1">
    <source>
        <dbReference type="HAMAP-Rule" id="MF_01220"/>
    </source>
</evidence>
<dbReference type="EC" id="2.7.4.22" evidence="1"/>
<dbReference type="EMBL" id="CP000855">
    <property type="protein sequence ID" value="ACJ16758.1"/>
    <property type="molecule type" value="Genomic_DNA"/>
</dbReference>
<dbReference type="RefSeq" id="WP_012572230.1">
    <property type="nucleotide sequence ID" value="NC_011529.1"/>
</dbReference>
<dbReference type="SMR" id="B6YXE5"/>
<dbReference type="STRING" id="523850.TON_1270"/>
<dbReference type="GeneID" id="7018296"/>
<dbReference type="KEGG" id="ton:TON_1270"/>
<dbReference type="PATRIC" id="fig|523850.10.peg.1277"/>
<dbReference type="eggNOG" id="arCOG00858">
    <property type="taxonomic scope" value="Archaea"/>
</dbReference>
<dbReference type="HOGENOM" id="CLU_079546_0_0_2"/>
<dbReference type="OrthoDB" id="372251at2157"/>
<dbReference type="UniPathway" id="UPA00159">
    <property type="reaction ID" value="UER00275"/>
</dbReference>
<dbReference type="Proteomes" id="UP000002727">
    <property type="component" value="Chromosome"/>
</dbReference>
<dbReference type="GO" id="GO:0005737">
    <property type="term" value="C:cytoplasm"/>
    <property type="evidence" value="ECO:0007669"/>
    <property type="project" value="UniProtKB-SubCell"/>
</dbReference>
<dbReference type="GO" id="GO:0005524">
    <property type="term" value="F:ATP binding"/>
    <property type="evidence" value="ECO:0007669"/>
    <property type="project" value="UniProtKB-KW"/>
</dbReference>
<dbReference type="GO" id="GO:0033862">
    <property type="term" value="F:UMP kinase activity"/>
    <property type="evidence" value="ECO:0007669"/>
    <property type="project" value="UniProtKB-EC"/>
</dbReference>
<dbReference type="GO" id="GO:0044210">
    <property type="term" value="P:'de novo' CTP biosynthetic process"/>
    <property type="evidence" value="ECO:0007669"/>
    <property type="project" value="UniProtKB-UniRule"/>
</dbReference>
<dbReference type="GO" id="GO:0006225">
    <property type="term" value="P:UDP biosynthetic process"/>
    <property type="evidence" value="ECO:0007669"/>
    <property type="project" value="TreeGrafter"/>
</dbReference>
<dbReference type="CDD" id="cd04253">
    <property type="entry name" value="AAK_UMPK-PyrH-Pf"/>
    <property type="match status" value="1"/>
</dbReference>
<dbReference type="FunFam" id="3.40.1160.10:FF:000030">
    <property type="entry name" value="Uridylate kinase"/>
    <property type="match status" value="1"/>
</dbReference>
<dbReference type="Gene3D" id="3.40.1160.10">
    <property type="entry name" value="Acetylglutamate kinase-like"/>
    <property type="match status" value="1"/>
</dbReference>
<dbReference type="HAMAP" id="MF_01220_A">
    <property type="entry name" value="PyrH_A"/>
    <property type="match status" value="1"/>
</dbReference>
<dbReference type="InterPro" id="IPR036393">
    <property type="entry name" value="AceGlu_kinase-like_sf"/>
</dbReference>
<dbReference type="InterPro" id="IPR001048">
    <property type="entry name" value="Asp/Glu/Uridylate_kinase"/>
</dbReference>
<dbReference type="InterPro" id="IPR011817">
    <property type="entry name" value="Uridylate_kinase"/>
</dbReference>
<dbReference type="InterPro" id="IPR011818">
    <property type="entry name" value="Uridylate_kinase_arch/spir"/>
</dbReference>
<dbReference type="NCBIfam" id="TIGR02076">
    <property type="entry name" value="pyrH_arch"/>
    <property type="match status" value="1"/>
</dbReference>
<dbReference type="PANTHER" id="PTHR42833">
    <property type="entry name" value="URIDYLATE KINASE"/>
    <property type="match status" value="1"/>
</dbReference>
<dbReference type="PANTHER" id="PTHR42833:SF4">
    <property type="entry name" value="URIDYLATE KINASE PUMPKIN, CHLOROPLASTIC"/>
    <property type="match status" value="1"/>
</dbReference>
<dbReference type="Pfam" id="PF00696">
    <property type="entry name" value="AA_kinase"/>
    <property type="match status" value="1"/>
</dbReference>
<dbReference type="PIRSF" id="PIRSF005650">
    <property type="entry name" value="Uridylate_kin"/>
    <property type="match status" value="1"/>
</dbReference>
<dbReference type="SUPFAM" id="SSF53633">
    <property type="entry name" value="Carbamate kinase-like"/>
    <property type="match status" value="1"/>
</dbReference>
<comment type="function">
    <text evidence="1">Catalyzes the reversible phosphorylation of UMP to UDP.</text>
</comment>
<comment type="catalytic activity">
    <reaction evidence="1">
        <text>UMP + ATP = UDP + ADP</text>
        <dbReference type="Rhea" id="RHEA:24400"/>
        <dbReference type="ChEBI" id="CHEBI:30616"/>
        <dbReference type="ChEBI" id="CHEBI:57865"/>
        <dbReference type="ChEBI" id="CHEBI:58223"/>
        <dbReference type="ChEBI" id="CHEBI:456216"/>
        <dbReference type="EC" id="2.7.4.22"/>
    </reaction>
</comment>
<comment type="activity regulation">
    <text evidence="1">Inhibited by UTP.</text>
</comment>
<comment type="pathway">
    <text evidence="1">Pyrimidine metabolism; CTP biosynthesis via de novo pathway; UDP from UMP (UMPK route): step 1/1.</text>
</comment>
<comment type="subunit">
    <text evidence="1">Homohexamer.</text>
</comment>
<comment type="subcellular location">
    <subcellularLocation>
        <location evidence="1">Cytoplasm</location>
    </subcellularLocation>
</comment>
<comment type="similarity">
    <text evidence="1">Belongs to the UMP kinase family.</text>
</comment>
<feature type="chain" id="PRO_1000139220" description="Uridylate kinase">
    <location>
        <begin position="1"/>
        <end position="225"/>
    </location>
</feature>
<feature type="binding site" evidence="1">
    <location>
        <begin position="9"/>
        <end position="10"/>
    </location>
    <ligand>
        <name>ATP</name>
        <dbReference type="ChEBI" id="CHEBI:30616"/>
    </ligand>
</feature>
<feature type="binding site" evidence="1">
    <location>
        <position position="44"/>
    </location>
    <ligand>
        <name>UMP</name>
        <dbReference type="ChEBI" id="CHEBI:57865"/>
    </ligand>
</feature>
<feature type="binding site" evidence="1">
    <location>
        <position position="45"/>
    </location>
    <ligand>
        <name>ATP</name>
        <dbReference type="ChEBI" id="CHEBI:30616"/>
    </ligand>
</feature>
<feature type="binding site" evidence="1">
    <location>
        <position position="49"/>
    </location>
    <ligand>
        <name>ATP</name>
        <dbReference type="ChEBI" id="CHEBI:30616"/>
    </ligand>
</feature>
<feature type="binding site" evidence="1">
    <location>
        <position position="66"/>
    </location>
    <ligand>
        <name>UMP</name>
        <dbReference type="ChEBI" id="CHEBI:57865"/>
    </ligand>
</feature>
<feature type="binding site" evidence="1">
    <location>
        <begin position="114"/>
        <end position="120"/>
    </location>
    <ligand>
        <name>UMP</name>
        <dbReference type="ChEBI" id="CHEBI:57865"/>
    </ligand>
</feature>
<feature type="binding site" evidence="1">
    <location>
        <position position="140"/>
    </location>
    <ligand>
        <name>ATP</name>
        <dbReference type="ChEBI" id="CHEBI:30616"/>
    </ligand>
</feature>
<feature type="binding site" evidence="1">
    <location>
        <position position="141"/>
    </location>
    <ligand>
        <name>ATP</name>
        <dbReference type="ChEBI" id="CHEBI:30616"/>
    </ligand>
</feature>
<feature type="binding site" evidence="1">
    <location>
        <position position="146"/>
    </location>
    <ligand>
        <name>ATP</name>
        <dbReference type="ChEBI" id="CHEBI:30616"/>
    </ligand>
</feature>
<feature type="binding site" evidence="1">
    <location>
        <position position="149"/>
    </location>
    <ligand>
        <name>ATP</name>
        <dbReference type="ChEBI" id="CHEBI:30616"/>
    </ligand>
</feature>
<name>PYRH_THEON</name>
<proteinExistence type="inferred from homology"/>
<organism>
    <name type="scientific">Thermococcus onnurineus (strain NA1)</name>
    <dbReference type="NCBI Taxonomy" id="523850"/>
    <lineage>
        <taxon>Archaea</taxon>
        <taxon>Methanobacteriati</taxon>
        <taxon>Methanobacteriota</taxon>
        <taxon>Thermococci</taxon>
        <taxon>Thermococcales</taxon>
        <taxon>Thermococcaceae</taxon>
        <taxon>Thermococcus</taxon>
    </lineage>
</organism>
<reference key="1">
    <citation type="journal article" date="2008" name="J. Bacteriol.">
        <title>The complete genome sequence of Thermococcus onnurineus NA1 reveals a mixed heterotrophic and carboxydotrophic metabolism.</title>
        <authorList>
            <person name="Lee H.S."/>
            <person name="Kang S.G."/>
            <person name="Bae S.S."/>
            <person name="Lim J.K."/>
            <person name="Cho Y."/>
            <person name="Kim Y.J."/>
            <person name="Jeon J.H."/>
            <person name="Cha S.-S."/>
            <person name="Kwon K.K."/>
            <person name="Kim H.-T."/>
            <person name="Park C.-J."/>
            <person name="Lee H.-W."/>
            <person name="Kim S.I."/>
            <person name="Chun J."/>
            <person name="Colwell R.R."/>
            <person name="Kim S.-J."/>
            <person name="Lee J.-H."/>
        </authorList>
    </citation>
    <scope>NUCLEOTIDE SEQUENCE [LARGE SCALE GENOMIC DNA]</scope>
    <source>
        <strain>NA1</strain>
    </source>
</reference>
<protein>
    <recommendedName>
        <fullName evidence="1">Uridylate kinase</fullName>
        <shortName evidence="1">UK</shortName>
        <ecNumber evidence="1">2.7.4.22</ecNumber>
    </recommendedName>
    <alternativeName>
        <fullName evidence="1">Uridine monophosphate kinase</fullName>
        <shortName evidence="1">UMP kinase</shortName>
        <shortName evidence="1">UMPK</shortName>
    </alternativeName>
</protein>
<keyword id="KW-0067">ATP-binding</keyword>
<keyword id="KW-0963">Cytoplasm</keyword>
<keyword id="KW-0418">Kinase</keyword>
<keyword id="KW-0547">Nucleotide-binding</keyword>
<keyword id="KW-0665">Pyrimidine biosynthesis</keyword>
<keyword id="KW-0808">Transferase</keyword>